<organism>
    <name type="scientific">Desulfotalea psychrophila (strain LSv54 / DSM 12343)</name>
    <dbReference type="NCBI Taxonomy" id="177439"/>
    <lineage>
        <taxon>Bacteria</taxon>
        <taxon>Pseudomonadati</taxon>
        <taxon>Thermodesulfobacteriota</taxon>
        <taxon>Desulfobulbia</taxon>
        <taxon>Desulfobulbales</taxon>
        <taxon>Desulfocapsaceae</taxon>
        <taxon>Desulfotalea</taxon>
    </lineage>
</organism>
<protein>
    <recommendedName>
        <fullName evidence="1">Glutamate 5-kinase</fullName>
        <ecNumber evidence="1">2.7.2.11</ecNumber>
    </recommendedName>
    <alternativeName>
        <fullName evidence="1">Gamma-glutamyl kinase</fullName>
        <shortName evidence="1">GK</shortName>
    </alternativeName>
</protein>
<accession>Q6AK08</accession>
<name>PROB_DESPS</name>
<evidence type="ECO:0000255" key="1">
    <source>
        <dbReference type="HAMAP-Rule" id="MF_00456"/>
    </source>
</evidence>
<evidence type="ECO:0000305" key="2"/>
<sequence>MQLRREIFDKARRVVVKVGSAILTNVGGIHTSFIADLAREISYLRQSGHEVILVSSGAVAAGRKKISWQDSAPLGMKEKQALAAIGQSHLMRTYEEAFGFYELDVAQILLTHADLSHRDRYLNIRNTILTLLKFGVTPIINENDTVSVEELKFGDNDTLAALLTNLLEADICICLTDVDALYDKNPQKDPTARPLHIVTKISPEIEAMAGNSNSLFGTGGMQSKIRAAKIVFSGGGTAIIGPGRAPRVLQRLFAGEDIGTIFLPCKERMKSKKQWIAHVLKPKGTLLLDAGACKALLQGGKSLLPSGIVGISGEFDRGDSVNCCRLDGSRIAVGLVNYASVDVNAIKGLQSREIASVLKCCDNEEVIHRDNLVILS</sequence>
<proteinExistence type="inferred from homology"/>
<comment type="function">
    <text evidence="1">Catalyzes the transfer of a phosphate group to glutamate to form L-glutamate 5-phosphate.</text>
</comment>
<comment type="catalytic activity">
    <reaction evidence="1">
        <text>L-glutamate + ATP = L-glutamyl 5-phosphate + ADP</text>
        <dbReference type="Rhea" id="RHEA:14877"/>
        <dbReference type="ChEBI" id="CHEBI:29985"/>
        <dbReference type="ChEBI" id="CHEBI:30616"/>
        <dbReference type="ChEBI" id="CHEBI:58274"/>
        <dbReference type="ChEBI" id="CHEBI:456216"/>
        <dbReference type="EC" id="2.7.2.11"/>
    </reaction>
</comment>
<comment type="pathway">
    <text evidence="1">Amino-acid biosynthesis; L-proline biosynthesis; L-glutamate 5-semialdehyde from L-glutamate: step 1/2.</text>
</comment>
<comment type="subcellular location">
    <subcellularLocation>
        <location evidence="1">Cytoplasm</location>
    </subcellularLocation>
</comment>
<comment type="similarity">
    <text evidence="1">Belongs to the glutamate 5-kinase family.</text>
</comment>
<comment type="sequence caution" evidence="2">
    <conflict type="erroneous initiation">
        <sequence resource="EMBL-CDS" id="CAG37318"/>
    </conflict>
</comment>
<keyword id="KW-0028">Amino-acid biosynthesis</keyword>
<keyword id="KW-0067">ATP-binding</keyword>
<keyword id="KW-0963">Cytoplasm</keyword>
<keyword id="KW-0418">Kinase</keyword>
<keyword id="KW-0547">Nucleotide-binding</keyword>
<keyword id="KW-0641">Proline biosynthesis</keyword>
<keyword id="KW-1185">Reference proteome</keyword>
<keyword id="KW-0808">Transferase</keyword>
<gene>
    <name evidence="1" type="primary">proB</name>
    <name type="ordered locus">DP2589</name>
</gene>
<feature type="chain" id="PRO_0000109667" description="Glutamate 5-kinase">
    <location>
        <begin position="1"/>
        <end position="376"/>
    </location>
</feature>
<feature type="domain" description="PUA" evidence="1">
    <location>
        <begin position="283"/>
        <end position="359"/>
    </location>
</feature>
<feature type="binding site" evidence="1">
    <location>
        <position position="17"/>
    </location>
    <ligand>
        <name>ATP</name>
        <dbReference type="ChEBI" id="CHEBI:30616"/>
    </ligand>
</feature>
<feature type="binding site" evidence="1">
    <location>
        <position position="56"/>
    </location>
    <ligand>
        <name>substrate</name>
    </ligand>
</feature>
<feature type="binding site" evidence="1">
    <location>
        <position position="144"/>
    </location>
    <ligand>
        <name>substrate</name>
    </ligand>
</feature>
<feature type="binding site" evidence="1">
    <location>
        <position position="156"/>
    </location>
    <ligand>
        <name>substrate</name>
    </ligand>
</feature>
<feature type="binding site" evidence="1">
    <location>
        <begin position="176"/>
        <end position="177"/>
    </location>
    <ligand>
        <name>ATP</name>
        <dbReference type="ChEBI" id="CHEBI:30616"/>
    </ligand>
</feature>
<feature type="binding site" evidence="1">
    <location>
        <begin position="218"/>
        <end position="224"/>
    </location>
    <ligand>
        <name>ATP</name>
        <dbReference type="ChEBI" id="CHEBI:30616"/>
    </ligand>
</feature>
<reference key="1">
    <citation type="journal article" date="2004" name="Environ. Microbiol.">
        <title>The genome of Desulfotalea psychrophila, a sulfate-reducing bacterium from permanently cold Arctic sediments.</title>
        <authorList>
            <person name="Rabus R."/>
            <person name="Ruepp A."/>
            <person name="Frickey T."/>
            <person name="Rattei T."/>
            <person name="Fartmann B."/>
            <person name="Stark M."/>
            <person name="Bauer M."/>
            <person name="Zibat A."/>
            <person name="Lombardot T."/>
            <person name="Becker I."/>
            <person name="Amann J."/>
            <person name="Gellner K."/>
            <person name="Teeling H."/>
            <person name="Leuschner W.D."/>
            <person name="Gloeckner F.-O."/>
            <person name="Lupas A.N."/>
            <person name="Amann R."/>
            <person name="Klenk H.-P."/>
        </authorList>
    </citation>
    <scope>NUCLEOTIDE SEQUENCE [LARGE SCALE GENOMIC DNA]</scope>
    <source>
        <strain>DSM 12343 / LSv54</strain>
    </source>
</reference>
<dbReference type="EC" id="2.7.2.11" evidence="1"/>
<dbReference type="EMBL" id="CR522870">
    <property type="protein sequence ID" value="CAG37318.1"/>
    <property type="status" value="ALT_INIT"/>
    <property type="molecule type" value="Genomic_DNA"/>
</dbReference>
<dbReference type="SMR" id="Q6AK08"/>
<dbReference type="STRING" id="177439.DP2589"/>
<dbReference type="KEGG" id="dps:DP2589"/>
<dbReference type="eggNOG" id="COG0263">
    <property type="taxonomic scope" value="Bacteria"/>
</dbReference>
<dbReference type="HOGENOM" id="CLU_025400_2_0_7"/>
<dbReference type="UniPathway" id="UPA00098">
    <property type="reaction ID" value="UER00359"/>
</dbReference>
<dbReference type="Proteomes" id="UP000000602">
    <property type="component" value="Chromosome"/>
</dbReference>
<dbReference type="GO" id="GO:0005829">
    <property type="term" value="C:cytosol"/>
    <property type="evidence" value="ECO:0007669"/>
    <property type="project" value="TreeGrafter"/>
</dbReference>
<dbReference type="GO" id="GO:0005524">
    <property type="term" value="F:ATP binding"/>
    <property type="evidence" value="ECO:0007669"/>
    <property type="project" value="UniProtKB-KW"/>
</dbReference>
<dbReference type="GO" id="GO:0004349">
    <property type="term" value="F:glutamate 5-kinase activity"/>
    <property type="evidence" value="ECO:0007669"/>
    <property type="project" value="UniProtKB-UniRule"/>
</dbReference>
<dbReference type="GO" id="GO:0003723">
    <property type="term" value="F:RNA binding"/>
    <property type="evidence" value="ECO:0007669"/>
    <property type="project" value="InterPro"/>
</dbReference>
<dbReference type="GO" id="GO:0055129">
    <property type="term" value="P:L-proline biosynthetic process"/>
    <property type="evidence" value="ECO:0007669"/>
    <property type="project" value="UniProtKB-UniRule"/>
</dbReference>
<dbReference type="CDD" id="cd04242">
    <property type="entry name" value="AAK_G5K_ProB"/>
    <property type="match status" value="1"/>
</dbReference>
<dbReference type="CDD" id="cd21157">
    <property type="entry name" value="PUA_G5K"/>
    <property type="match status" value="1"/>
</dbReference>
<dbReference type="FunFam" id="2.30.130.10:FF:000007">
    <property type="entry name" value="Glutamate 5-kinase"/>
    <property type="match status" value="1"/>
</dbReference>
<dbReference type="FunFam" id="3.40.1160.10:FF:000018">
    <property type="entry name" value="Glutamate 5-kinase"/>
    <property type="match status" value="1"/>
</dbReference>
<dbReference type="Gene3D" id="3.40.1160.10">
    <property type="entry name" value="Acetylglutamate kinase-like"/>
    <property type="match status" value="1"/>
</dbReference>
<dbReference type="Gene3D" id="2.30.130.10">
    <property type="entry name" value="PUA domain"/>
    <property type="match status" value="1"/>
</dbReference>
<dbReference type="HAMAP" id="MF_00456">
    <property type="entry name" value="ProB"/>
    <property type="match status" value="1"/>
</dbReference>
<dbReference type="InterPro" id="IPR036393">
    <property type="entry name" value="AceGlu_kinase-like_sf"/>
</dbReference>
<dbReference type="InterPro" id="IPR001048">
    <property type="entry name" value="Asp/Glu/Uridylate_kinase"/>
</dbReference>
<dbReference type="InterPro" id="IPR041739">
    <property type="entry name" value="G5K_ProB"/>
</dbReference>
<dbReference type="InterPro" id="IPR001057">
    <property type="entry name" value="Glu/AcGlu_kinase"/>
</dbReference>
<dbReference type="InterPro" id="IPR011529">
    <property type="entry name" value="Glu_5kinase"/>
</dbReference>
<dbReference type="InterPro" id="IPR005715">
    <property type="entry name" value="Glu_5kinase/COase_Synthase"/>
</dbReference>
<dbReference type="InterPro" id="IPR019797">
    <property type="entry name" value="Glutamate_5-kinase_CS"/>
</dbReference>
<dbReference type="InterPro" id="IPR002478">
    <property type="entry name" value="PUA"/>
</dbReference>
<dbReference type="InterPro" id="IPR015947">
    <property type="entry name" value="PUA-like_sf"/>
</dbReference>
<dbReference type="InterPro" id="IPR036974">
    <property type="entry name" value="PUA_sf"/>
</dbReference>
<dbReference type="NCBIfam" id="TIGR01027">
    <property type="entry name" value="proB"/>
    <property type="match status" value="1"/>
</dbReference>
<dbReference type="PANTHER" id="PTHR43654">
    <property type="entry name" value="GLUTAMATE 5-KINASE"/>
    <property type="match status" value="1"/>
</dbReference>
<dbReference type="PANTHER" id="PTHR43654:SF1">
    <property type="entry name" value="ISOPENTENYL PHOSPHATE KINASE"/>
    <property type="match status" value="1"/>
</dbReference>
<dbReference type="Pfam" id="PF00696">
    <property type="entry name" value="AA_kinase"/>
    <property type="match status" value="1"/>
</dbReference>
<dbReference type="Pfam" id="PF01472">
    <property type="entry name" value="PUA"/>
    <property type="match status" value="1"/>
</dbReference>
<dbReference type="PIRSF" id="PIRSF000729">
    <property type="entry name" value="GK"/>
    <property type="match status" value="1"/>
</dbReference>
<dbReference type="PRINTS" id="PR00474">
    <property type="entry name" value="GLU5KINASE"/>
</dbReference>
<dbReference type="SMART" id="SM00359">
    <property type="entry name" value="PUA"/>
    <property type="match status" value="1"/>
</dbReference>
<dbReference type="SUPFAM" id="SSF53633">
    <property type="entry name" value="Carbamate kinase-like"/>
    <property type="match status" value="1"/>
</dbReference>
<dbReference type="SUPFAM" id="SSF88697">
    <property type="entry name" value="PUA domain-like"/>
    <property type="match status" value="1"/>
</dbReference>
<dbReference type="PROSITE" id="PS00902">
    <property type="entry name" value="GLUTAMATE_5_KINASE"/>
    <property type="match status" value="1"/>
</dbReference>
<dbReference type="PROSITE" id="PS50890">
    <property type="entry name" value="PUA"/>
    <property type="match status" value="1"/>
</dbReference>